<keyword id="KW-0067">ATP-binding</keyword>
<keyword id="KW-0963">Cytoplasm</keyword>
<keyword id="KW-0968">Cytoplasmic vesicle</keyword>
<keyword id="KW-0418">Kinase</keyword>
<keyword id="KW-0460">Magnesium</keyword>
<keyword id="KW-0479">Metal-binding</keyword>
<keyword id="KW-0547">Nucleotide-binding</keyword>
<keyword id="KW-1185">Reference proteome</keyword>
<keyword id="KW-0723">Serine/threonine-protein kinase</keyword>
<keyword id="KW-0728">SH3 domain</keyword>
<keyword id="KW-0808">Transferase</keyword>
<keyword id="KW-0829">Tyrosine-protein kinase</keyword>
<reference evidence="20" key="1">
    <citation type="journal article" date="2000" name="Science">
        <title>The genome sequence of Drosophila melanogaster.</title>
        <authorList>
            <person name="Adams M.D."/>
            <person name="Celniker S.E."/>
            <person name="Holt R.A."/>
            <person name="Evans C.A."/>
            <person name="Gocayne J.D."/>
            <person name="Amanatides P.G."/>
            <person name="Scherer S.E."/>
            <person name="Li P.W."/>
            <person name="Hoskins R.A."/>
            <person name="Galle R.F."/>
            <person name="George R.A."/>
            <person name="Lewis S.E."/>
            <person name="Richards S."/>
            <person name="Ashburner M."/>
            <person name="Henderson S.N."/>
            <person name="Sutton G.G."/>
            <person name="Wortman J.R."/>
            <person name="Yandell M.D."/>
            <person name="Zhang Q."/>
            <person name="Chen L.X."/>
            <person name="Brandon R.C."/>
            <person name="Rogers Y.-H.C."/>
            <person name="Blazej R.G."/>
            <person name="Champe M."/>
            <person name="Pfeiffer B.D."/>
            <person name="Wan K.H."/>
            <person name="Doyle C."/>
            <person name="Baxter E.G."/>
            <person name="Helt G."/>
            <person name="Nelson C.R."/>
            <person name="Miklos G.L.G."/>
            <person name="Abril J.F."/>
            <person name="Agbayani A."/>
            <person name="An H.-J."/>
            <person name="Andrews-Pfannkoch C."/>
            <person name="Baldwin D."/>
            <person name="Ballew R.M."/>
            <person name="Basu A."/>
            <person name="Baxendale J."/>
            <person name="Bayraktaroglu L."/>
            <person name="Beasley E.M."/>
            <person name="Beeson K.Y."/>
            <person name="Benos P.V."/>
            <person name="Berman B.P."/>
            <person name="Bhandari D."/>
            <person name="Bolshakov S."/>
            <person name="Borkova D."/>
            <person name="Botchan M.R."/>
            <person name="Bouck J."/>
            <person name="Brokstein P."/>
            <person name="Brottier P."/>
            <person name="Burtis K.C."/>
            <person name="Busam D.A."/>
            <person name="Butler H."/>
            <person name="Cadieu E."/>
            <person name="Center A."/>
            <person name="Chandra I."/>
            <person name="Cherry J.M."/>
            <person name="Cawley S."/>
            <person name="Dahlke C."/>
            <person name="Davenport L.B."/>
            <person name="Davies P."/>
            <person name="de Pablos B."/>
            <person name="Delcher A."/>
            <person name="Deng Z."/>
            <person name="Mays A.D."/>
            <person name="Dew I."/>
            <person name="Dietz S.M."/>
            <person name="Dodson K."/>
            <person name="Doup L.E."/>
            <person name="Downes M."/>
            <person name="Dugan-Rocha S."/>
            <person name="Dunkov B.C."/>
            <person name="Dunn P."/>
            <person name="Durbin K.J."/>
            <person name="Evangelista C.C."/>
            <person name="Ferraz C."/>
            <person name="Ferriera S."/>
            <person name="Fleischmann W."/>
            <person name="Fosler C."/>
            <person name="Gabrielian A.E."/>
            <person name="Garg N.S."/>
            <person name="Gelbart W.M."/>
            <person name="Glasser K."/>
            <person name="Glodek A."/>
            <person name="Gong F."/>
            <person name="Gorrell J.H."/>
            <person name="Gu Z."/>
            <person name="Guan P."/>
            <person name="Harris M."/>
            <person name="Harris N.L."/>
            <person name="Harvey D.A."/>
            <person name="Heiman T.J."/>
            <person name="Hernandez J.R."/>
            <person name="Houck J."/>
            <person name="Hostin D."/>
            <person name="Houston K.A."/>
            <person name="Howland T.J."/>
            <person name="Wei M.-H."/>
            <person name="Ibegwam C."/>
            <person name="Jalali M."/>
            <person name="Kalush F."/>
            <person name="Karpen G.H."/>
            <person name="Ke Z."/>
            <person name="Kennison J.A."/>
            <person name="Ketchum K.A."/>
            <person name="Kimmel B.E."/>
            <person name="Kodira C.D."/>
            <person name="Kraft C.L."/>
            <person name="Kravitz S."/>
            <person name="Kulp D."/>
            <person name="Lai Z."/>
            <person name="Lasko P."/>
            <person name="Lei Y."/>
            <person name="Levitsky A.A."/>
            <person name="Li J.H."/>
            <person name="Li Z."/>
            <person name="Liang Y."/>
            <person name="Lin X."/>
            <person name="Liu X."/>
            <person name="Mattei B."/>
            <person name="McIntosh T.C."/>
            <person name="McLeod M.P."/>
            <person name="McPherson D."/>
            <person name="Merkulov G."/>
            <person name="Milshina N.V."/>
            <person name="Mobarry C."/>
            <person name="Morris J."/>
            <person name="Moshrefi A."/>
            <person name="Mount S.M."/>
            <person name="Moy M."/>
            <person name="Murphy B."/>
            <person name="Murphy L."/>
            <person name="Muzny D.M."/>
            <person name="Nelson D.L."/>
            <person name="Nelson D.R."/>
            <person name="Nelson K.A."/>
            <person name="Nixon K."/>
            <person name="Nusskern D.R."/>
            <person name="Pacleb J.M."/>
            <person name="Palazzolo M."/>
            <person name="Pittman G.S."/>
            <person name="Pan S."/>
            <person name="Pollard J."/>
            <person name="Puri V."/>
            <person name="Reese M.G."/>
            <person name="Reinert K."/>
            <person name="Remington K."/>
            <person name="Saunders R.D.C."/>
            <person name="Scheeler F."/>
            <person name="Shen H."/>
            <person name="Shue B.C."/>
            <person name="Siden-Kiamos I."/>
            <person name="Simpson M."/>
            <person name="Skupski M.P."/>
            <person name="Smith T.J."/>
            <person name="Spier E."/>
            <person name="Spradling A.C."/>
            <person name="Stapleton M."/>
            <person name="Strong R."/>
            <person name="Sun E."/>
            <person name="Svirskas R."/>
            <person name="Tector C."/>
            <person name="Turner R."/>
            <person name="Venter E."/>
            <person name="Wang A.H."/>
            <person name="Wang X."/>
            <person name="Wang Z.-Y."/>
            <person name="Wassarman D.A."/>
            <person name="Weinstock G.M."/>
            <person name="Weissenbach J."/>
            <person name="Williams S.M."/>
            <person name="Woodage T."/>
            <person name="Worley K.C."/>
            <person name="Wu D."/>
            <person name="Yang S."/>
            <person name="Yao Q.A."/>
            <person name="Ye J."/>
            <person name="Yeh R.-F."/>
            <person name="Zaveri J.S."/>
            <person name="Zhan M."/>
            <person name="Zhang G."/>
            <person name="Zhao Q."/>
            <person name="Zheng L."/>
            <person name="Zheng X.H."/>
            <person name="Zhong F.N."/>
            <person name="Zhong W."/>
            <person name="Zhou X."/>
            <person name="Zhu S.C."/>
            <person name="Zhu X."/>
            <person name="Smith H.O."/>
            <person name="Gibbs R.A."/>
            <person name="Myers E.W."/>
            <person name="Rubin G.M."/>
            <person name="Venter J.C."/>
        </authorList>
    </citation>
    <scope>NUCLEOTIDE SEQUENCE [LARGE SCALE GENOMIC DNA]</scope>
    <source>
        <strain evidence="20">Berkeley</strain>
    </source>
</reference>
<reference evidence="20" key="2">
    <citation type="journal article" date="2002" name="Genome Biol.">
        <title>Annotation of the Drosophila melanogaster euchromatic genome: a systematic review.</title>
        <authorList>
            <person name="Misra S."/>
            <person name="Crosby M.A."/>
            <person name="Mungall C.J."/>
            <person name="Matthews B.B."/>
            <person name="Campbell K.S."/>
            <person name="Hradecky P."/>
            <person name="Huang Y."/>
            <person name="Kaminker J.S."/>
            <person name="Millburn G.H."/>
            <person name="Prochnik S.E."/>
            <person name="Smith C.D."/>
            <person name="Tupy J.L."/>
            <person name="Whitfield E.J."/>
            <person name="Bayraktaroglu L."/>
            <person name="Berman B.P."/>
            <person name="Bettencourt B.R."/>
            <person name="Celniker S.E."/>
            <person name="de Grey A.D.N.J."/>
            <person name="Drysdale R.A."/>
            <person name="Harris N.L."/>
            <person name="Richter J."/>
            <person name="Russo S."/>
            <person name="Schroeder A.J."/>
            <person name="Shu S.Q."/>
            <person name="Stapleton M."/>
            <person name="Yamada C."/>
            <person name="Ashburner M."/>
            <person name="Gelbart W.M."/>
            <person name="Rubin G.M."/>
            <person name="Lewis S.E."/>
        </authorList>
    </citation>
    <scope>GENOME REANNOTATION</scope>
    <source>
        <strain evidence="20">Berkeley</strain>
    </source>
</reference>
<reference evidence="18" key="3">
    <citation type="journal article" date="2002" name="Genome Biol.">
        <title>A Drosophila full-length cDNA resource.</title>
        <authorList>
            <person name="Stapleton M."/>
            <person name="Carlson J.W."/>
            <person name="Brokstein P."/>
            <person name="Yu C."/>
            <person name="Champe M."/>
            <person name="George R.A."/>
            <person name="Guarin H."/>
            <person name="Kronmiller B."/>
            <person name="Pacleb J.M."/>
            <person name="Park S."/>
            <person name="Wan K.H."/>
            <person name="Rubin G.M."/>
            <person name="Celniker S.E."/>
        </authorList>
    </citation>
    <scope>NUCLEOTIDE SEQUENCE [LARGE SCALE MRNA]</scope>
    <source>
        <strain evidence="18">Berkeley</strain>
        <tissue evidence="18">Head</tissue>
    </source>
</reference>
<reference evidence="17" key="4">
    <citation type="journal article" date="2002" name="J. Biol. Chem.">
        <title>Drosophila Ack targets its substrate, the sorting nexin DSH3PX1, to a protein complex involved in axonal guidance.</title>
        <authorList>
            <person name="Worby C.A."/>
            <person name="Simonson-Leff N."/>
            <person name="Clemens J.C."/>
            <person name="Huddler D. Jr."/>
            <person name="Muda M."/>
            <person name="Dixon J.E."/>
        </authorList>
    </citation>
    <scope>FUNCTION</scope>
    <scope>CATALYTIC ACTIVITY</scope>
    <scope>COFACTOR</scope>
    <scope>INTERACTION WITH DOCK AND SH3PX1</scope>
    <scope>AUTOPHOSPHORYLATION</scope>
    <scope>MUTAGENESIS OF LYS-156</scope>
</reference>
<reference evidence="17" key="5">
    <citation type="journal article" date="2002" name="Mol. Cell. Biol.">
        <title>ACK family tyrosine kinase activity is a component of Dcdc42 signaling during dorsal closure in Drosophila melanogaster.</title>
        <authorList>
            <person name="Sem K.P."/>
            <person name="Zahedi B."/>
            <person name="Tan I."/>
            <person name="Deak M."/>
            <person name="Lim L."/>
            <person name="Harden N."/>
        </authorList>
    </citation>
    <scope>FUNCTION</scope>
    <scope>TISSUE SPECIFICITY</scope>
    <scope>DEVELOPMENTAL STAGE</scope>
    <scope>MUTAGENESIS OF LYS-156</scope>
</reference>
<reference evidence="17" key="6">
    <citation type="journal article" date="2008" name="Dev. Dyn.">
        <title>Leading edge-secreted Dpp cooperates with ACK-dependent signaling from the amnioserosa to regulate myosin levels during dorsal closure.</title>
        <authorList>
            <person name="Zahedi B."/>
            <person name="Shen W."/>
            <person name="Xu X."/>
            <person name="Chen X."/>
            <person name="Mahey M."/>
            <person name="Harden N."/>
        </authorList>
    </citation>
    <scope>FUNCTION</scope>
    <scope>DISRUPTION PHENOTYPE</scope>
</reference>
<reference evidence="17" key="7">
    <citation type="journal article" date="2012" name="PLoS Genet.">
        <title>Drosophila activated Cdc42 kinase has an anti-apoptotic function.</title>
        <authorList>
            <person name="Schoenherr J.A."/>
            <person name="Drennan J.M."/>
            <person name="Martinez J.S."/>
            <person name="Chikka M.R."/>
            <person name="Hall M.C."/>
            <person name="Chang H.C."/>
            <person name="Clemens J.C."/>
        </authorList>
    </citation>
    <scope>FUNCTION</scope>
    <scope>INTERACTION WITH DRK</scope>
    <scope>SUBCELLULAR LOCATION</scope>
    <scope>PHOSPHORYLATION</scope>
    <scope>DISRUPTION PHENOTYPE</scope>
    <scope>MUTAGENESIS OF LYS-156</scope>
</reference>
<reference evidence="17" key="8">
    <citation type="journal article" date="2013" name="Dev. Biol.">
        <title>Activated Cdc42 kinase regulates Dock localization in male germ cells during Drosophila spermatogenesis.</title>
        <authorList>
            <person name="Abdallah A.M."/>
            <person name="Zhou X."/>
            <person name="Kim C."/>
            <person name="Shah K.K."/>
            <person name="Hogden C."/>
            <person name="Schoenherr J.A."/>
            <person name="Clemens J.C."/>
            <person name="Chang H.C."/>
        </authorList>
    </citation>
    <scope>FUNCTION</scope>
    <scope>INTERACTION WITH DOCK</scope>
    <scope>SUBCELLULAR LOCATION</scope>
    <scope>DOMAIN</scope>
    <scope>DISRUPTION PHENOTYPE</scope>
    <scope>MUTAGENESIS OF LYS-156 AND 549-LEU--ASP-551</scope>
    <source>
        <strain evidence="16">Canton-S</strain>
    </source>
</reference>
<reference evidence="17" key="9">
    <citation type="journal article" date="2013" name="PLoS ONE">
        <title>Modulation of morphogenesis by Egfr during dorsal closure in Drosophila.</title>
        <authorList>
            <person name="Shen W."/>
            <person name="Chen X."/>
            <person name="Cormier O."/>
            <person name="Cheng D.C."/>
            <person name="Reed B."/>
            <person name="Harden N."/>
        </authorList>
    </citation>
    <scope>MUTAGENESIS OF LYS-156</scope>
</reference>
<reference evidence="17" key="10">
    <citation type="journal article" date="2014" name="EMBO Rep.">
        <title>Ack kinase regulates CTP synthase filaments during Drosophila oogenesis.</title>
        <authorList>
            <person name="Strochlic T.I."/>
            <person name="Stavrides K.P."/>
            <person name="Thomas S.V."/>
            <person name="Nicolas E."/>
            <person name="O'Reilly A.M."/>
            <person name="Peterson J.R."/>
        </authorList>
    </citation>
    <scope>FUNCTION</scope>
    <scope>SUBCELLULAR LOCATION</scope>
    <scope>TISSUE SPECIFICITY</scope>
    <scope>DISRUPTION PHENOTYPE</scope>
    <scope>MUTAGENESIS OF LYS-156</scope>
</reference>
<reference evidence="17" key="11">
    <citation type="journal article" date="2016" name="Cell Discov.">
        <title>Ack promotes tissue growth via phosphorylation and suppression of the Hippo pathway component Expanded.</title>
        <authorList>
            <person name="Hu L."/>
            <person name="Xu J."/>
            <person name="Yin M.X."/>
            <person name="Zhang L."/>
            <person name="Lu Y."/>
            <person name="Wu W."/>
            <person name="Xue Z."/>
            <person name="Ho M.S."/>
            <person name="Gao G."/>
            <person name="Zhao Y."/>
            <person name="Zhang L."/>
        </authorList>
    </citation>
    <scope>FUNCTION</scope>
    <scope>INTERACTION WITH YKI AND EX</scope>
    <scope>DISRUPTION PHENOTYPE</scope>
    <scope>MUTAGENESIS OF LYS-156</scope>
</reference>
<evidence type="ECO:0000255" key="1">
    <source>
        <dbReference type="PROSITE-ProRule" id="PRU00159"/>
    </source>
</evidence>
<evidence type="ECO:0000255" key="2">
    <source>
        <dbReference type="PROSITE-ProRule" id="PRU00192"/>
    </source>
</evidence>
<evidence type="ECO:0000255" key="3">
    <source>
        <dbReference type="PROSITE-ProRule" id="PRU00212"/>
    </source>
</evidence>
<evidence type="ECO:0000256" key="4">
    <source>
        <dbReference type="SAM" id="MobiDB-lite"/>
    </source>
</evidence>
<evidence type="ECO:0000269" key="5">
    <source>
    </source>
</evidence>
<evidence type="ECO:0000269" key="6">
    <source>
    </source>
</evidence>
<evidence type="ECO:0000269" key="7">
    <source>
    </source>
</evidence>
<evidence type="ECO:0000269" key="8">
    <source>
    </source>
</evidence>
<evidence type="ECO:0000269" key="9">
    <source>
    </source>
</evidence>
<evidence type="ECO:0000269" key="10">
    <source>
    </source>
</evidence>
<evidence type="ECO:0000269" key="11">
    <source>
    </source>
</evidence>
<evidence type="ECO:0000269" key="12">
    <source>
    </source>
</evidence>
<evidence type="ECO:0000303" key="13">
    <source>
    </source>
</evidence>
<evidence type="ECO:0000303" key="14">
    <source>
    </source>
</evidence>
<evidence type="ECO:0000303" key="15">
    <source>
    </source>
</evidence>
<evidence type="ECO:0000303" key="16">
    <source>
    </source>
</evidence>
<evidence type="ECO:0000305" key="17"/>
<evidence type="ECO:0000312" key="18">
    <source>
        <dbReference type="EMBL" id="AAD55428.1"/>
    </source>
</evidence>
<evidence type="ECO:0000312" key="19">
    <source>
        <dbReference type="FlyBase" id="FBgn0028484"/>
    </source>
</evidence>
<evidence type="ECO:0000312" key="20">
    <source>
        <dbReference type="Proteomes" id="UP000000803"/>
    </source>
</evidence>
<proteinExistence type="evidence at protein level"/>
<accession>Q9VZI2</accession>
<accession>Q9U4G3</accession>
<protein>
    <recommendedName>
        <fullName evidence="15">Activated Cdc42 kinase Ack</fullName>
        <ecNumber evidence="5">2.7.10.2</ecNumber>
        <ecNumber evidence="5">2.7.11.1</ecNumber>
    </recommendedName>
</protein>
<comment type="function">
    <text evidence="5 6 7 8 9 11 12">Non-receptor tyrosine-protein and serine/threonine-protein kinase that is implicated in diverse biological functions such as cell survival, cell differentiation, cell growth and proliferation (PubMed:11997505, PubMed:18816840, PubMed:22615583, PubMed:23562806, PubMed:25223282, PubMed:27462444). Phosphorylates SH3PX1 and ex (PubMed:11773052, PubMed:22615583, PubMed:27462444). Phosphorylates SH3PX1 predominantly on 'Tyr-56', which likely promotes the recruitment of SH3PX1 to an axonal guidance receptor complex that includes dock and Dscam; because phosphorylation of SH3PX1 increases its interaction with the complex member dock while decreasing its interaction with the actin cytoskeleton modulator WASp (PubMed:11773052). In the wing and eye, promotes tissue growth, and during embryogenesis coordinates cell shape changes required for correct dorsal closure (PubMed:18816840, PubMed:22615583, PubMed:27462444). Functions in the negative regulation of the Hippo/SWH (Sav/Wts/Hpo) signaling pathway by enhancing yki activity thereby promoting cell proliferation and inhibiting apoptosis (PubMed:22615583, PubMed:27462444). This is accomplished, at least in part, by phosphorylating ex thereby reducing its ability to efficiently activate the Hippo signaling cascade (PubMed:27462444). In the eye disk, wing disk and possibly spermatids, inhibits programmed cell death induced by hid and rpr through a mechanism that is independent of the MAP kinase signal transduction pathway (PubMed:22615583). Essential for male and female fertility (PubMed:22615583, PubMed:23562806). During oogenesis required for the correct temporal assembly, and consequently the catalytic activity of long Ctps filaments (cytoophidium) in the germline nurse cells, likely by phosphorylating an unidentified substrate that is essential for linking individual Ctps filaments into large, catalytically active assemblies (PubMed:25223282).</text>
</comment>
<comment type="catalytic activity">
    <reaction evidence="5">
        <text>L-tyrosyl-[protein] + ATP = O-phospho-L-tyrosyl-[protein] + ADP + H(+)</text>
        <dbReference type="Rhea" id="RHEA:10596"/>
        <dbReference type="Rhea" id="RHEA-COMP:10136"/>
        <dbReference type="Rhea" id="RHEA-COMP:20101"/>
        <dbReference type="ChEBI" id="CHEBI:15378"/>
        <dbReference type="ChEBI" id="CHEBI:30616"/>
        <dbReference type="ChEBI" id="CHEBI:46858"/>
        <dbReference type="ChEBI" id="CHEBI:61978"/>
        <dbReference type="ChEBI" id="CHEBI:456216"/>
        <dbReference type="EC" id="2.7.10.2"/>
    </reaction>
</comment>
<comment type="catalytic activity">
    <reaction evidence="5">
        <text>L-threonyl-[protein] + ATP = O-phospho-L-threonyl-[protein] + ADP + H(+)</text>
        <dbReference type="Rhea" id="RHEA:46608"/>
        <dbReference type="Rhea" id="RHEA-COMP:11060"/>
        <dbReference type="Rhea" id="RHEA-COMP:11605"/>
        <dbReference type="ChEBI" id="CHEBI:15378"/>
        <dbReference type="ChEBI" id="CHEBI:30013"/>
        <dbReference type="ChEBI" id="CHEBI:30616"/>
        <dbReference type="ChEBI" id="CHEBI:61977"/>
        <dbReference type="ChEBI" id="CHEBI:456216"/>
        <dbReference type="EC" id="2.7.11.1"/>
    </reaction>
</comment>
<comment type="cofactor">
    <cofactor evidence="5">
        <name>Mg(2+)</name>
        <dbReference type="ChEBI" id="CHEBI:18420"/>
    </cofactor>
</comment>
<comment type="subunit">
    <text evidence="5 8 9 12">Interacts with yki and ex (PubMed:27462444). Interacts with drk (PubMed:22615583). Likely to be a member of an axonal guidance receptor complex that includes SH3PX1, dock and Dscam (PubMed:11773052). Interacts (via N-terminus) with dock (PubMed:11773052, PubMed:23562806). Interacts with SH3PX1 (via SH3 domain) (PubMed:11773052).</text>
</comment>
<comment type="subcellular location">
    <subcellularLocation>
        <location evidence="8 11">Cytoplasm</location>
    </subcellularLocation>
    <subcellularLocation>
        <location evidence="9">Cytoplasmic vesicle</location>
        <location evidence="9">Clathrin-coated vesicle</location>
    </subcellularLocation>
    <text evidence="8 9 11">In nurse cells localizes to cytoophidium, a subcellular filamentary structure where CTP synthase (Ctps) is compartmentalized (PubMed:25223282). In third instar photoreceptor R-cells, expressed in the cytoplasm and cytoplasmic puncta (PubMed:22615583). In spermatocytes displays localization to peripheral clathrin-positive structures and localization to some secretory clathrin (PubMed:23562806).</text>
</comment>
<comment type="tissue specificity">
    <text evidence="6 11">Detected in ovaries (at protein level) (PubMed:25223282). In adults, relatively higher expression in the head compared to the body (PubMed:11997505).</text>
</comment>
<comment type="developmental stage">
    <text evidence="6">In stage 13 embryos at the beginning of dorsal closure, enriched in the leading edge of the epidermis (at protein level).</text>
</comment>
<comment type="domain">
    <text evidence="9">The SAM, Protein kinase and SH3 domains are required for sperm formation.</text>
</comment>
<comment type="domain">
    <text evidence="9">The SAM and SH3 domains are required for localization to clathrin-coated vesicles in spermatocytes.</text>
</comment>
<comment type="PTM">
    <text evidence="5 8">Phosphorylated (PubMed:22615583). Autophosphorylated (PubMed:11773052).</text>
</comment>
<comment type="disruption phenotype">
    <text evidence="7 8 9 11 12">No visible developmental defects but males and females display reduced fertility (PubMed:22615583, PubMed:23562806, PubMed:27462444). Males are sterile due to disruption of spermatid coiling (PubMed:22615583, PubMed:23562806, PubMed:27462444). Spermatids individualization complexes are displaced from the outer region of the testis coil to the inner region and display increased apoptosis (PubMed:22615583). During oogenesis, defective assembly and disassembly of cytoophidium in nurse cells result in a range of phenotypes resulting from reduced CTP production (PubMed:25223282). These include reduced egg laying, disruptions in the plasma membrane between adjacent nurse cells that result in the nurse cells fusing, and reduced nurse cell nuclei diameter most likely as a result of defective endoreplication (PubMed:25223282). Cytoophidium are observed in the germanium at an earlier developmental stage and persist inappropriately into late-stage egg chambers (PubMed:25223282). The number of cytoophidium in the cytoplasm of nurse cells is increased and their length is reduced (PubMed:25223282). Enhances the small eye phenotype in hid mutants (PubMed:22615583). Developing embryos display a very low frequently of dorsal defects (PubMed:18816840). Simultaneous knockdown of Ack and Ack-like results in many embryos failing to properly secrete the cuticle likely due to the loss of zip expression (PubMed:18816840). Mutants also display defects in the dorsal surface including holes in the cuticle and germband retraction failure (PubMed:18816840).</text>
</comment>
<comment type="similarity">
    <text evidence="17">Belongs to the protein kinase superfamily. Tyr protein kinase family.</text>
</comment>
<organism evidence="20">
    <name type="scientific">Drosophila melanogaster</name>
    <name type="common">Fruit fly</name>
    <dbReference type="NCBI Taxonomy" id="7227"/>
    <lineage>
        <taxon>Eukaryota</taxon>
        <taxon>Metazoa</taxon>
        <taxon>Ecdysozoa</taxon>
        <taxon>Arthropoda</taxon>
        <taxon>Hexapoda</taxon>
        <taxon>Insecta</taxon>
        <taxon>Pterygota</taxon>
        <taxon>Neoptera</taxon>
        <taxon>Endopterygota</taxon>
        <taxon>Diptera</taxon>
        <taxon>Brachycera</taxon>
        <taxon>Muscomorpha</taxon>
        <taxon>Ephydroidea</taxon>
        <taxon>Drosophilidae</taxon>
        <taxon>Drosophila</taxon>
        <taxon>Sophophora</taxon>
    </lineage>
</organism>
<name>ACK_DROME</name>
<sequence length="1073" mass="118418">MTSTSAVDGGLGSETAWLEDLLREVQLEQFLDRIRDDLQVTRLAHFDYVLPDDLERCGLGKPAIRRLMEAVRKKKAHQWRKNILSKLIGGGKQPSSKKQSSAARESSQGNGTQLTCLIHEKDITMGLKLGDGSFGVVRRGEWSASPAGKVIPVAVKVLKSDNLTQPGIIDDFFREVQAMHALDHANLVRLYGVVLSQPMMMITELAERGSLLDTLRKQCRHTSLTIIWNWSVQIVTGMAYLEQKRFLHRDLACRNVLLAAGNKIKIGDFGLMRALPQEDDCYVMSEHKKVPFPWCAPESLRFRQFSHASDTWMFGVTLWEMFSFGEDPWVGLNGSQILRKIDREGERLHQPDACPPDVYAMMLQCWDKTPAERPTFAALKEYLASMSPPVMRASRSHHESKGLQIEPGDTIAIIDGRHELKLIKGQNQRTFDIGIFPRNLLEQRKVGAAGDVVMRSSVGNGSSSSPFGFCWGGAAAMANGDDRQRKCASMTNQPHAKERKSTSSKQFAYNKLVNDSATGLQRRNAVKHKGVVVGPQRPPPPQFQQEGILIDISPDMRPIAEAGTGGAKGAGDSSSLQADSSFCILDAPIDVPTYAGSSGSGDLNVSPTYYNEQPQFDFDPAKMTASPGRLQPPPYQMPPTYSNTMEFVQKRDLHQQQLATPVRERDPFDTTNVETTVALYSNFNQSLEAASPPAPIYNSPSVRKSLFGGSKSNKENIPALESAAMQLNLSNLTLERHDATCIQPVEPVPAPPGDGVLLDKSFIAELEKDMYSNGQNRAQEEYQRNSTQMYASKDMVYKQNLTPLKNGAAPGSVHSNHSSPSSTASPKQNNVEAAAAAAATTQSVVNRIWYEQVASTQSEYYAQPPTEQAEEQIYQNHRHQQQQQQELNHSFVAISNRVVAPKNNAYSSTASLYDAVAASTAGSTYYGQVPNGSGAVLYDEVTQDDYLRPTRPAPLAPPPLSAQQIQRRMEKMRLQQQQQLDGAHQLYAPVPSDYGREQEKLQQLMQELGSSAVEQDVRNALRAASGDVGLATRHYKIDQLARLGVAGRPQCEQALQQTNWSLEVAAELLLNAG</sequence>
<feature type="chain" id="PRO_0000449972" description="Activated Cdc42 kinase Ack">
    <location>
        <begin position="1"/>
        <end position="1073"/>
    </location>
</feature>
<feature type="domain" description="Protein kinase" evidence="1">
    <location>
        <begin position="123"/>
        <end position="383"/>
    </location>
</feature>
<feature type="domain" description="SH3" evidence="2">
    <location>
        <begin position="386"/>
        <end position="446"/>
    </location>
</feature>
<feature type="domain" description="UBA" evidence="3">
    <location>
        <begin position="1029"/>
        <end position="1072"/>
    </location>
</feature>
<feature type="region of interest" description="Disordered" evidence="4">
    <location>
        <begin position="88"/>
        <end position="110"/>
    </location>
</feature>
<feature type="region of interest" description="Disordered" evidence="4">
    <location>
        <begin position="484"/>
        <end position="506"/>
    </location>
</feature>
<feature type="region of interest" description="Disordered" evidence="4">
    <location>
        <begin position="803"/>
        <end position="834"/>
    </location>
</feature>
<feature type="region of interest" description="Disordered" evidence="4">
    <location>
        <begin position="862"/>
        <end position="882"/>
    </location>
</feature>
<feature type="compositionally biased region" description="Low complexity" evidence="4">
    <location>
        <begin position="812"/>
        <end position="826"/>
    </location>
</feature>
<feature type="active site" description="Proton acceptor" evidence="1">
    <location>
        <position position="250"/>
    </location>
</feature>
<feature type="binding site" evidence="1">
    <location>
        <begin position="129"/>
        <end position="137"/>
    </location>
    <ligand>
        <name>ATP</name>
        <dbReference type="ChEBI" id="CHEBI:30616"/>
    </ligand>
</feature>
<feature type="binding site" evidence="1 12">
    <location>
        <position position="156"/>
    </location>
    <ligand>
        <name>ATP</name>
        <dbReference type="ChEBI" id="CHEBI:30616"/>
    </ligand>
</feature>
<feature type="mutagenesis site" description="Loss of enzyme activity. Increase in apoptotic cells in the eye and wing. Increase in bristle number in the interommatidial lattice and decrease in pigment cell number. Disrupts vesicular localization of dock in spermatocytes. Fails to rescue the nurse cell plasma membrane defects and male sterility observed in null mutants. Fails to rescue the small eye phenotype induced by hid but able to rescue the small eye phenotype induced by rpr." evidence="5 8 9 11">
    <original>K</original>
    <variation>A</variation>
    <location>
        <position position="156"/>
    </location>
</feature>
<feature type="mutagenesis site" description="Loss of enzyme activity. Many embryos die before hatching. Fails to promote yki-dependent tissue growth in the eye and wing. Overexpression in wing imaginal disks frequently results in wings with blisters and ectopic veins. Eyes are disorganized and ommatidia are almost completely absent, eye bristles are not present in posterior two-thirds of the eye and bristle clusters occur at the anterior end. Increased Egfr endocytosis in embryos. No effect on Dpp expression in the leading edge cells." evidence="6 10 12">
    <original>K</original>
    <variation>R</variation>
    <location>
        <position position="156"/>
    </location>
</feature>
<feature type="mutagenesis site" description="Able to rescue male sterility." evidence="9">
    <original>LID</original>
    <variation>AAA</variation>
    <location>
        <begin position="549"/>
        <end position="551"/>
    </location>
</feature>
<gene>
    <name evidence="19" type="primary">Ack</name>
    <name evidence="14" type="synonym">DACK</name>
    <name evidence="13" type="synonym">p145</name>
    <name evidence="19" type="ORF">CG14992</name>
</gene>
<dbReference type="EC" id="2.7.10.2" evidence="5"/>
<dbReference type="EC" id="2.7.11.1" evidence="5"/>
<dbReference type="EMBL" id="AF181642">
    <property type="protein sequence ID" value="AAD55428.1"/>
    <property type="molecule type" value="mRNA"/>
</dbReference>
<dbReference type="EMBL" id="AE014296">
    <property type="protein sequence ID" value="AAF47839.2"/>
    <property type="molecule type" value="Genomic_DNA"/>
</dbReference>
<dbReference type="RefSeq" id="NP_647859.1">
    <property type="nucleotide sequence ID" value="NM_139602.3"/>
</dbReference>
<dbReference type="SMR" id="Q9VZI2"/>
<dbReference type="FunCoup" id="Q9VZI2">
    <property type="interactions" value="42"/>
</dbReference>
<dbReference type="IntAct" id="Q9VZI2">
    <property type="interactions" value="5"/>
</dbReference>
<dbReference type="STRING" id="7227.FBpp0073067"/>
<dbReference type="PaxDb" id="7227-FBpp0073067"/>
<dbReference type="EnsemblMetazoa" id="FBtr0073211">
    <property type="protein sequence ID" value="FBpp0073067"/>
    <property type="gene ID" value="FBgn0028484"/>
</dbReference>
<dbReference type="GeneID" id="38489"/>
<dbReference type="KEGG" id="dme:Dmel_CG14992"/>
<dbReference type="UCSC" id="CG14992-RA">
    <property type="organism name" value="d. melanogaster"/>
</dbReference>
<dbReference type="AGR" id="FB:FBgn0028484"/>
<dbReference type="CTD" id="107482"/>
<dbReference type="FlyBase" id="FBgn0028484">
    <property type="gene designation" value="Ack"/>
</dbReference>
<dbReference type="VEuPathDB" id="VectorBase:FBgn0028484"/>
<dbReference type="eggNOG" id="KOG0199">
    <property type="taxonomic scope" value="Eukaryota"/>
</dbReference>
<dbReference type="GeneTree" id="ENSGT00940000160853"/>
<dbReference type="HOGENOM" id="CLU_000288_7_39_1"/>
<dbReference type="InParanoid" id="Q9VZI2"/>
<dbReference type="OMA" id="QMYASKD"/>
<dbReference type="OrthoDB" id="635774at2759"/>
<dbReference type="PhylomeDB" id="Q9VZI2"/>
<dbReference type="SignaLink" id="Q9VZI2"/>
<dbReference type="BioGRID-ORCS" id="38489">
    <property type="hits" value="0 hits in 3 CRISPR screens"/>
</dbReference>
<dbReference type="ChiTaRS" id="Ack">
    <property type="organism name" value="fly"/>
</dbReference>
<dbReference type="GenomeRNAi" id="38489"/>
<dbReference type="PRO" id="PR:Q9VZI2"/>
<dbReference type="Proteomes" id="UP000000803">
    <property type="component" value="Chromosome 3L"/>
</dbReference>
<dbReference type="Bgee" id="FBgn0028484">
    <property type="expression patterns" value="Expressed in enteroblast (Drosophila) in digestive tract and 132 other cell types or tissues"/>
</dbReference>
<dbReference type="ExpressionAtlas" id="Q9VZI2">
    <property type="expression patterns" value="baseline and differential"/>
</dbReference>
<dbReference type="GO" id="GO:0071944">
    <property type="term" value="C:cell periphery"/>
    <property type="evidence" value="ECO:0000314"/>
    <property type="project" value="FlyBase"/>
</dbReference>
<dbReference type="GO" id="GO:0030136">
    <property type="term" value="C:clathrin-coated vesicle"/>
    <property type="evidence" value="ECO:0000314"/>
    <property type="project" value="FlyBase"/>
</dbReference>
<dbReference type="GO" id="GO:0097268">
    <property type="term" value="C:cytoophidium"/>
    <property type="evidence" value="ECO:0000314"/>
    <property type="project" value="UniProtKB"/>
</dbReference>
<dbReference type="GO" id="GO:0005737">
    <property type="term" value="C:cytoplasm"/>
    <property type="evidence" value="ECO:0000314"/>
    <property type="project" value="UniProtKB"/>
</dbReference>
<dbReference type="GO" id="GO:0005886">
    <property type="term" value="C:plasma membrane"/>
    <property type="evidence" value="ECO:0000318"/>
    <property type="project" value="GO_Central"/>
</dbReference>
<dbReference type="GO" id="GO:0032991">
    <property type="term" value="C:protein-containing complex"/>
    <property type="evidence" value="ECO:0000314"/>
    <property type="project" value="UniProtKB"/>
</dbReference>
<dbReference type="GO" id="GO:0005524">
    <property type="term" value="F:ATP binding"/>
    <property type="evidence" value="ECO:0007669"/>
    <property type="project" value="UniProtKB-KW"/>
</dbReference>
<dbReference type="GO" id="GO:0140297">
    <property type="term" value="F:DNA-binding transcription factor binding"/>
    <property type="evidence" value="ECO:0000353"/>
    <property type="project" value="UniProtKB"/>
</dbReference>
<dbReference type="GO" id="GO:0046872">
    <property type="term" value="F:metal ion binding"/>
    <property type="evidence" value="ECO:0007669"/>
    <property type="project" value="UniProtKB-KW"/>
</dbReference>
<dbReference type="GO" id="GO:0004715">
    <property type="term" value="F:non-membrane spanning protein tyrosine kinase activity"/>
    <property type="evidence" value="ECO:0000314"/>
    <property type="project" value="FlyBase"/>
</dbReference>
<dbReference type="GO" id="GO:0004674">
    <property type="term" value="F:protein serine/threonine kinase activity"/>
    <property type="evidence" value="ECO:0007669"/>
    <property type="project" value="UniProtKB-KW"/>
</dbReference>
<dbReference type="GO" id="GO:0004713">
    <property type="term" value="F:protein tyrosine kinase activity"/>
    <property type="evidence" value="ECO:0000314"/>
    <property type="project" value="UniProtKB"/>
</dbReference>
<dbReference type="GO" id="GO:0042169">
    <property type="term" value="F:SH2 domain binding"/>
    <property type="evidence" value="ECO:0000314"/>
    <property type="project" value="UniProtKB"/>
</dbReference>
<dbReference type="GO" id="GO:0017124">
    <property type="term" value="F:SH3 domain binding"/>
    <property type="evidence" value="ECO:0000314"/>
    <property type="project" value="UniProtKB"/>
</dbReference>
<dbReference type="GO" id="GO:0071364">
    <property type="term" value="P:cellular response to epidermal growth factor stimulus"/>
    <property type="evidence" value="ECO:0000315"/>
    <property type="project" value="UniProtKB"/>
</dbReference>
<dbReference type="GO" id="GO:0006241">
    <property type="term" value="P:CTP biosynthetic process"/>
    <property type="evidence" value="ECO:0000315"/>
    <property type="project" value="UniProtKB"/>
</dbReference>
<dbReference type="GO" id="GO:0007391">
    <property type="term" value="P:dorsal closure"/>
    <property type="evidence" value="ECO:0000315"/>
    <property type="project" value="FlyBase"/>
</dbReference>
<dbReference type="GO" id="GO:0046664">
    <property type="term" value="P:dorsal closure, amnioserosa morphology change"/>
    <property type="evidence" value="ECO:0000316"/>
    <property type="project" value="UniProtKB"/>
</dbReference>
<dbReference type="GO" id="GO:0008258">
    <property type="term" value="P:head involution"/>
    <property type="evidence" value="ECO:0000316"/>
    <property type="project" value="UniProtKB"/>
</dbReference>
<dbReference type="GO" id="GO:0031034">
    <property type="term" value="P:myosin filament assembly"/>
    <property type="evidence" value="ECO:0000315"/>
    <property type="project" value="UniProtKB"/>
</dbReference>
<dbReference type="GO" id="GO:0043066">
    <property type="term" value="P:negative regulation of apoptotic process"/>
    <property type="evidence" value="ECO:0000316"/>
    <property type="project" value="UniProtKB"/>
</dbReference>
<dbReference type="GO" id="GO:0035331">
    <property type="term" value="P:negative regulation of hippo signaling"/>
    <property type="evidence" value="ECO:0000315"/>
    <property type="project" value="FlyBase"/>
</dbReference>
<dbReference type="GO" id="GO:0018108">
    <property type="term" value="P:peptidyl-tyrosine phosphorylation"/>
    <property type="evidence" value="ECO:0000314"/>
    <property type="project" value="UniProtKB"/>
</dbReference>
<dbReference type="GO" id="GO:0006644">
    <property type="term" value="P:phospholipid metabolic process"/>
    <property type="evidence" value="ECO:0000315"/>
    <property type="project" value="UniProtKB"/>
</dbReference>
<dbReference type="GO" id="GO:0008104">
    <property type="term" value="P:protein localization"/>
    <property type="evidence" value="ECO:0000315"/>
    <property type="project" value="FlyBase"/>
</dbReference>
<dbReference type="GO" id="GO:0007291">
    <property type="term" value="P:sperm individualization"/>
    <property type="evidence" value="ECO:0000315"/>
    <property type="project" value="UniProtKB"/>
</dbReference>
<dbReference type="GO" id="GO:0007286">
    <property type="term" value="P:spermatid development"/>
    <property type="evidence" value="ECO:0000315"/>
    <property type="project" value="FlyBase"/>
</dbReference>
<dbReference type="CDD" id="cd05040">
    <property type="entry name" value="PTKc_Ack_like"/>
    <property type="match status" value="1"/>
</dbReference>
<dbReference type="CDD" id="cd09539">
    <property type="entry name" value="SAM_TNK-like"/>
    <property type="match status" value="1"/>
</dbReference>
<dbReference type="CDD" id="cd14328">
    <property type="entry name" value="UBA_TNK1"/>
    <property type="match status" value="1"/>
</dbReference>
<dbReference type="FunFam" id="1.10.510.10:FF:000080">
    <property type="entry name" value="Putative activated CDC42 kinase 1"/>
    <property type="match status" value="1"/>
</dbReference>
<dbReference type="FunFam" id="3.30.200.20:FF:000107">
    <property type="entry name" value="Putative activated CDC42 kinase 1"/>
    <property type="match status" value="1"/>
</dbReference>
<dbReference type="Gene3D" id="1.10.8.10">
    <property type="entry name" value="DNA helicase RuvA subunit, C-terminal domain"/>
    <property type="match status" value="1"/>
</dbReference>
<dbReference type="Gene3D" id="3.30.200.20">
    <property type="entry name" value="Phosphorylase Kinase, domain 1"/>
    <property type="match status" value="1"/>
</dbReference>
<dbReference type="Gene3D" id="1.10.510.10">
    <property type="entry name" value="Transferase(Phosphotransferase) domain 1"/>
    <property type="match status" value="1"/>
</dbReference>
<dbReference type="InterPro" id="IPR055175">
    <property type="entry name" value="ACK/TNK-like_SAM"/>
</dbReference>
<dbReference type="InterPro" id="IPR011009">
    <property type="entry name" value="Kinase-like_dom_sf"/>
</dbReference>
<dbReference type="InterPro" id="IPR050198">
    <property type="entry name" value="Non-receptor_tyrosine_kinases"/>
</dbReference>
<dbReference type="InterPro" id="IPR000719">
    <property type="entry name" value="Prot_kinase_dom"/>
</dbReference>
<dbReference type="InterPro" id="IPR017441">
    <property type="entry name" value="Protein_kinase_ATP_BS"/>
</dbReference>
<dbReference type="InterPro" id="IPR001245">
    <property type="entry name" value="Ser-Thr/Tyr_kinase_cat_dom"/>
</dbReference>
<dbReference type="InterPro" id="IPR049587">
    <property type="entry name" value="TNK-like_SAM"/>
</dbReference>
<dbReference type="InterPro" id="IPR008266">
    <property type="entry name" value="Tyr_kinase_AS"/>
</dbReference>
<dbReference type="InterPro" id="IPR020635">
    <property type="entry name" value="Tyr_kinase_cat_dom"/>
</dbReference>
<dbReference type="InterPro" id="IPR015940">
    <property type="entry name" value="UBA"/>
</dbReference>
<dbReference type="PANTHER" id="PTHR24418">
    <property type="entry name" value="TYROSINE-PROTEIN KINASE"/>
    <property type="match status" value="1"/>
</dbReference>
<dbReference type="Pfam" id="PF07714">
    <property type="entry name" value="PK_Tyr_Ser-Thr"/>
    <property type="match status" value="1"/>
</dbReference>
<dbReference type="Pfam" id="PF22931">
    <property type="entry name" value="SAM_TNK"/>
    <property type="match status" value="1"/>
</dbReference>
<dbReference type="PRINTS" id="PR00109">
    <property type="entry name" value="TYRKINASE"/>
</dbReference>
<dbReference type="SMART" id="SM00219">
    <property type="entry name" value="TyrKc"/>
    <property type="match status" value="1"/>
</dbReference>
<dbReference type="SUPFAM" id="SSF56112">
    <property type="entry name" value="Protein kinase-like (PK-like)"/>
    <property type="match status" value="1"/>
</dbReference>
<dbReference type="PROSITE" id="PS00107">
    <property type="entry name" value="PROTEIN_KINASE_ATP"/>
    <property type="match status" value="1"/>
</dbReference>
<dbReference type="PROSITE" id="PS50011">
    <property type="entry name" value="PROTEIN_KINASE_DOM"/>
    <property type="match status" value="1"/>
</dbReference>
<dbReference type="PROSITE" id="PS00109">
    <property type="entry name" value="PROTEIN_KINASE_TYR"/>
    <property type="match status" value="1"/>
</dbReference>
<dbReference type="PROSITE" id="PS50030">
    <property type="entry name" value="UBA"/>
    <property type="match status" value="1"/>
</dbReference>